<protein>
    <recommendedName>
        <fullName>Glutathione S-transferase</fullName>
        <ecNumber>2.5.1.18</ecNumber>
    </recommendedName>
    <alternativeName>
        <fullName>GST class-sigma</fullName>
    </alternativeName>
</protein>
<organism>
    <name type="scientific">Anopheles gambiae</name>
    <name type="common">African malaria mosquito</name>
    <dbReference type="NCBI Taxonomy" id="7165"/>
    <lineage>
        <taxon>Eukaryota</taxon>
        <taxon>Metazoa</taxon>
        <taxon>Ecdysozoa</taxon>
        <taxon>Arthropoda</taxon>
        <taxon>Hexapoda</taxon>
        <taxon>Insecta</taxon>
        <taxon>Pterygota</taxon>
        <taxon>Neoptera</taxon>
        <taxon>Endopterygota</taxon>
        <taxon>Diptera</taxon>
        <taxon>Nematocera</taxon>
        <taxon>Culicoidea</taxon>
        <taxon>Culicidae</taxon>
        <taxon>Anophelinae</taxon>
        <taxon>Anopheles</taxon>
    </lineage>
</organism>
<accession>P46428</accession>
<accession>Q7PGA2</accession>
<proteinExistence type="evidence at transcript level"/>
<evidence type="ECO:0000250" key="1"/>
<evidence type="ECO:0000250" key="2">
    <source>
        <dbReference type="UniProtKB" id="O60760"/>
    </source>
</evidence>
<evidence type="ECO:0000250" key="3">
    <source>
        <dbReference type="UniProtKB" id="P46088"/>
    </source>
</evidence>
<evidence type="ECO:0000303" key="4">
    <source>
    </source>
</evidence>
<evidence type="ECO:0000305" key="5"/>
<comment type="function">
    <text>Conjugation of reduced glutathione to a wide number of exogenous and endogenous hydrophobic electrophiles.</text>
</comment>
<comment type="catalytic activity">
    <reaction>
        <text>RX + glutathione = an S-substituted glutathione + a halide anion + H(+)</text>
        <dbReference type="Rhea" id="RHEA:16437"/>
        <dbReference type="ChEBI" id="CHEBI:15378"/>
        <dbReference type="ChEBI" id="CHEBI:16042"/>
        <dbReference type="ChEBI" id="CHEBI:17792"/>
        <dbReference type="ChEBI" id="CHEBI:57925"/>
        <dbReference type="ChEBI" id="CHEBI:90779"/>
        <dbReference type="EC" id="2.5.1.18"/>
    </reaction>
</comment>
<comment type="subunit">
    <text evidence="1">Homodimer.</text>
</comment>
<comment type="alternative products">
    <event type="alternative splicing"/>
    <isoform>
        <id>P46428-1</id>
        <name>A</name>
        <sequence type="displayed"/>
    </isoform>
    <isoform>
        <id>P46428-2</id>
        <name>B</name>
        <sequence type="described" ref="VSP_029900"/>
    </isoform>
</comment>
<comment type="similarity">
    <text evidence="5">Belongs to the GST superfamily. Sigma family.</text>
</comment>
<comment type="sequence caution" evidence="5">
    <conflict type="erroneous initiation">
        <sequence resource="EMBL-CDS" id="AAA29358"/>
    </conflict>
</comment>
<comment type="sequence caution" evidence="5">
    <conflict type="erroneous initiation">
        <sequence resource="EMBL-CDS" id="EAA45010"/>
    </conflict>
</comment>
<name>GST_ANOGA</name>
<dbReference type="EC" id="2.5.1.18"/>
<dbReference type="EMBL" id="L07880">
    <property type="protein sequence ID" value="AAA29358.1"/>
    <property type="status" value="ALT_INIT"/>
    <property type="molecule type" value="mRNA"/>
</dbReference>
<dbReference type="EMBL" id="AAAB01008849">
    <property type="protein sequence ID" value="EAA45010.4"/>
    <property type="status" value="ALT_INIT"/>
    <property type="molecule type" value="Genomic_DNA"/>
</dbReference>
<dbReference type="RefSeq" id="XP_311546.4">
    <property type="nucleotide sequence ID" value="XM_311546.4"/>
</dbReference>
<dbReference type="SMR" id="P46428"/>
<dbReference type="FunCoup" id="P46428">
    <property type="interactions" value="372"/>
</dbReference>
<dbReference type="STRING" id="7165.P46428"/>
<dbReference type="PaxDb" id="7165-AGAP010404-PA"/>
<dbReference type="EnsemblMetazoa" id="AGAP010404-RA">
    <molecule id="P46428-2"/>
    <property type="protein sequence ID" value="AGAP010404-PA"/>
    <property type="gene ID" value="AGAP010404"/>
</dbReference>
<dbReference type="VEuPathDB" id="VectorBase:AGAMI1_003048"/>
<dbReference type="VEuPathDB" id="VectorBase:AGAP010404"/>
<dbReference type="eggNOG" id="KOG1695">
    <property type="taxonomic scope" value="Eukaryota"/>
</dbReference>
<dbReference type="HOGENOM" id="CLU_039475_1_0_1"/>
<dbReference type="InParanoid" id="P46428"/>
<dbReference type="Proteomes" id="UP000007062">
    <property type="component" value="Chromosome 3L"/>
</dbReference>
<dbReference type="GO" id="GO:0004364">
    <property type="term" value="F:glutathione transferase activity"/>
    <property type="evidence" value="ECO:0000318"/>
    <property type="project" value="GO_Central"/>
</dbReference>
<dbReference type="GO" id="GO:0006749">
    <property type="term" value="P:glutathione metabolic process"/>
    <property type="evidence" value="ECO:0000318"/>
    <property type="project" value="GO_Central"/>
</dbReference>
<dbReference type="CDD" id="cd03192">
    <property type="entry name" value="GST_C_Sigma_like"/>
    <property type="match status" value="1"/>
</dbReference>
<dbReference type="CDD" id="cd03039">
    <property type="entry name" value="GST_N_Sigma_like"/>
    <property type="match status" value="1"/>
</dbReference>
<dbReference type="FunFam" id="1.20.1050.10:FF:000030">
    <property type="entry name" value="Glutathione S-transferase S1"/>
    <property type="match status" value="1"/>
</dbReference>
<dbReference type="FunFam" id="3.40.30.10:FF:000035">
    <property type="entry name" value="hematopoietic prostaglandin D synthase"/>
    <property type="match status" value="1"/>
</dbReference>
<dbReference type="Gene3D" id="1.20.1050.10">
    <property type="match status" value="1"/>
</dbReference>
<dbReference type="Gene3D" id="3.40.30.10">
    <property type="entry name" value="Glutaredoxin"/>
    <property type="match status" value="1"/>
</dbReference>
<dbReference type="InterPro" id="IPR010987">
    <property type="entry name" value="Glutathione-S-Trfase_C-like"/>
</dbReference>
<dbReference type="InterPro" id="IPR036282">
    <property type="entry name" value="Glutathione-S-Trfase_C_sf"/>
</dbReference>
<dbReference type="InterPro" id="IPR040079">
    <property type="entry name" value="Glutathione_S-Trfase"/>
</dbReference>
<dbReference type="InterPro" id="IPR004045">
    <property type="entry name" value="Glutathione_S-Trfase_N"/>
</dbReference>
<dbReference type="InterPro" id="IPR004046">
    <property type="entry name" value="GST_C"/>
</dbReference>
<dbReference type="InterPro" id="IPR050213">
    <property type="entry name" value="GST_superfamily"/>
</dbReference>
<dbReference type="InterPro" id="IPR036249">
    <property type="entry name" value="Thioredoxin-like_sf"/>
</dbReference>
<dbReference type="PANTHER" id="PTHR11571">
    <property type="entry name" value="GLUTATHIONE S-TRANSFERASE"/>
    <property type="match status" value="1"/>
</dbReference>
<dbReference type="PANTHER" id="PTHR11571:SF224">
    <property type="entry name" value="HEMATOPOIETIC PROSTAGLANDIN D SYNTHASE"/>
    <property type="match status" value="1"/>
</dbReference>
<dbReference type="Pfam" id="PF14497">
    <property type="entry name" value="GST_C_3"/>
    <property type="match status" value="1"/>
</dbReference>
<dbReference type="Pfam" id="PF02798">
    <property type="entry name" value="GST_N"/>
    <property type="match status" value="1"/>
</dbReference>
<dbReference type="SFLD" id="SFLDG01205">
    <property type="entry name" value="AMPS.1"/>
    <property type="match status" value="1"/>
</dbReference>
<dbReference type="SFLD" id="SFLDS00019">
    <property type="entry name" value="Glutathione_Transferase_(cytos"/>
    <property type="match status" value="1"/>
</dbReference>
<dbReference type="SUPFAM" id="SSF47616">
    <property type="entry name" value="GST C-terminal domain-like"/>
    <property type="match status" value="1"/>
</dbReference>
<dbReference type="SUPFAM" id="SSF52833">
    <property type="entry name" value="Thioredoxin-like"/>
    <property type="match status" value="1"/>
</dbReference>
<dbReference type="PROSITE" id="PS50405">
    <property type="entry name" value="GST_CTER"/>
    <property type="match status" value="1"/>
</dbReference>
<dbReference type="PROSITE" id="PS50404">
    <property type="entry name" value="GST_NTER"/>
    <property type="match status" value="1"/>
</dbReference>
<keyword id="KW-0025">Alternative splicing</keyword>
<keyword id="KW-1185">Reference proteome</keyword>
<keyword id="KW-0808">Transferase</keyword>
<sequence length="203" mass="23246">MPDYKVYYFNVKALGEPLRFLLSYGNLPFDDVRITREEWPALKPTMPMGQMPVLEVDGKKVHQSVAMSRYLANQVGLAGADDWENLMIDTVVDTVNDFRLKIAIVAYEPDDMVKEKKMVTLNNEVIPFYLTKLNVIAKENNGHLVLGKPTWADVYFAGILDYLNYLTKTNLLENFPNLQEVVQKVLDNENVKAYIAKRPITEV</sequence>
<reference key="1">
    <citation type="journal article" date="1993" name="Insect Mol. Biol.">
        <title>A glutathione S-transferase gene of the vector mosquito, Anopheles gambiae.</title>
        <authorList>
            <person name="Reiss R.A."/>
            <person name="James A.A."/>
        </authorList>
    </citation>
    <scope>NUCLEOTIDE SEQUENCE [MRNA] (ISOFORM B)</scope>
    <source>
        <strain>G3</strain>
    </source>
</reference>
<reference key="2">
    <citation type="journal article" date="2002" name="Science">
        <title>The genome sequence of the malaria mosquito Anopheles gambiae.</title>
        <authorList>
            <person name="Holt R.A."/>
            <person name="Subramanian G.M."/>
            <person name="Halpern A."/>
            <person name="Sutton G.G."/>
            <person name="Charlab R."/>
            <person name="Nusskern D.R."/>
            <person name="Wincker P."/>
            <person name="Clark A.G."/>
            <person name="Ribeiro J.M.C."/>
            <person name="Wides R."/>
            <person name="Salzberg S.L."/>
            <person name="Loftus B.J."/>
            <person name="Yandell M.D."/>
            <person name="Majoros W.H."/>
            <person name="Rusch D.B."/>
            <person name="Lai Z."/>
            <person name="Kraft C.L."/>
            <person name="Abril J.F."/>
            <person name="Anthouard V."/>
            <person name="Arensburger P."/>
            <person name="Atkinson P.W."/>
            <person name="Baden H."/>
            <person name="de Berardinis V."/>
            <person name="Baldwin D."/>
            <person name="Benes V."/>
            <person name="Biedler J."/>
            <person name="Blass C."/>
            <person name="Bolanos R."/>
            <person name="Boscus D."/>
            <person name="Barnstead M."/>
            <person name="Cai S."/>
            <person name="Center A."/>
            <person name="Chaturverdi K."/>
            <person name="Christophides G.K."/>
            <person name="Chrystal M.A.M."/>
            <person name="Clamp M."/>
            <person name="Cravchik A."/>
            <person name="Curwen V."/>
            <person name="Dana A."/>
            <person name="Delcher A."/>
            <person name="Dew I."/>
            <person name="Evans C.A."/>
            <person name="Flanigan M."/>
            <person name="Grundschober-Freimoser A."/>
            <person name="Friedli L."/>
            <person name="Gu Z."/>
            <person name="Guan P."/>
            <person name="Guigo R."/>
            <person name="Hillenmeyer M.E."/>
            <person name="Hladun S.L."/>
            <person name="Hogan J.R."/>
            <person name="Hong Y.S."/>
            <person name="Hoover J."/>
            <person name="Jaillon O."/>
            <person name="Ke Z."/>
            <person name="Kodira C.D."/>
            <person name="Kokoza E."/>
            <person name="Koutsos A."/>
            <person name="Letunic I."/>
            <person name="Levitsky A.A."/>
            <person name="Liang Y."/>
            <person name="Lin J.-J."/>
            <person name="Lobo N.F."/>
            <person name="Lopez J.R."/>
            <person name="Malek J.A."/>
            <person name="McIntosh T.C."/>
            <person name="Meister S."/>
            <person name="Miller J.R."/>
            <person name="Mobarry C."/>
            <person name="Mongin E."/>
            <person name="Murphy S.D."/>
            <person name="O'Brochta D.A."/>
            <person name="Pfannkoch C."/>
            <person name="Qi R."/>
            <person name="Regier M.A."/>
            <person name="Remington K."/>
            <person name="Shao H."/>
            <person name="Sharakhova M.V."/>
            <person name="Sitter C.D."/>
            <person name="Shetty J."/>
            <person name="Smith T.J."/>
            <person name="Strong R."/>
            <person name="Sun J."/>
            <person name="Thomasova D."/>
            <person name="Ton L.Q."/>
            <person name="Topalis P."/>
            <person name="Tu Z.J."/>
            <person name="Unger M.F."/>
            <person name="Walenz B."/>
            <person name="Wang A.H."/>
            <person name="Wang J."/>
            <person name="Wang M."/>
            <person name="Wang X."/>
            <person name="Woodford K.J."/>
            <person name="Wortman J.R."/>
            <person name="Wu M."/>
            <person name="Yao A."/>
            <person name="Zdobnov E.M."/>
            <person name="Zhang H."/>
            <person name="Zhao Q."/>
            <person name="Zhao S."/>
            <person name="Zhu S.C."/>
            <person name="Zhimulev I."/>
            <person name="Coluzzi M."/>
            <person name="della Torre A."/>
            <person name="Roth C.W."/>
            <person name="Louis C."/>
            <person name="Kalush F."/>
            <person name="Mural R.J."/>
            <person name="Myers E.W."/>
            <person name="Adams M.D."/>
            <person name="Smith H.O."/>
            <person name="Broder S."/>
            <person name="Gardner M.J."/>
            <person name="Fraser C.M."/>
            <person name="Birney E."/>
            <person name="Bork P."/>
            <person name="Brey P.T."/>
            <person name="Venter J.C."/>
            <person name="Weissenbach J."/>
            <person name="Kafatos F.C."/>
            <person name="Collins F.H."/>
            <person name="Hoffman S.L."/>
        </authorList>
    </citation>
    <scope>NUCLEOTIDE SEQUENCE [LARGE SCALE GENOMIC DNA]</scope>
    <source>
        <strain>PEST</strain>
    </source>
</reference>
<gene>
    <name type="primary">GstS1</name>
    <name type="ORF">AGAP010404</name>
</gene>
<feature type="chain" id="PRO_0000185915" description="Glutathione S-transferase">
    <location>
        <begin position="1"/>
        <end position="203"/>
    </location>
</feature>
<feature type="domain" description="GST N-terminal">
    <location>
        <begin position="2"/>
        <end position="79"/>
    </location>
</feature>
<feature type="domain" description="GST C-terminal">
    <location>
        <begin position="81"/>
        <end position="203"/>
    </location>
</feature>
<feature type="binding site" evidence="2">
    <location>
        <position position="8"/>
    </location>
    <ligand>
        <name>glutathione</name>
        <dbReference type="ChEBI" id="CHEBI:57925"/>
    </ligand>
</feature>
<feature type="binding site" evidence="2">
    <location>
        <position position="39"/>
    </location>
    <ligand>
        <name>glutathione</name>
        <dbReference type="ChEBI" id="CHEBI:57925"/>
    </ligand>
</feature>
<feature type="binding site" evidence="3">
    <location>
        <position position="43"/>
    </location>
    <ligand>
        <name>glutathione</name>
        <dbReference type="ChEBI" id="CHEBI:57925"/>
    </ligand>
</feature>
<feature type="binding site" evidence="2">
    <location>
        <begin position="49"/>
        <end position="51"/>
    </location>
    <ligand>
        <name>glutathione</name>
        <dbReference type="ChEBI" id="CHEBI:57925"/>
    </ligand>
</feature>
<feature type="binding site" evidence="2">
    <location>
        <begin position="63"/>
        <end position="64"/>
    </location>
    <ligand>
        <name>glutathione</name>
        <dbReference type="ChEBI" id="CHEBI:57925"/>
    </ligand>
</feature>
<feature type="splice variant" id="VSP_029900" description="In isoform B." evidence="4">
    <original>KVHQSVAMSRYLANQVGLAGADDWENLMIDTVVDTV</original>
    <variation>RVHQSLAMCRYVAKQINLAGDNPLEALQIDAIVDTI</variation>
    <location>
        <begin position="60"/>
        <end position="95"/>
    </location>
</feature>
<feature type="sequence conflict" description="In Ref. 1; AAA29358." evidence="5" ref="1">
    <original>G</original>
    <variation>R</variation>
    <location>
        <position position="49"/>
    </location>
</feature>